<keyword id="KW-0010">Activator</keyword>
<keyword id="KW-0067">ATP-binding</keyword>
<keyword id="KW-0963">Cytoplasm</keyword>
<keyword id="KW-0418">Kinase</keyword>
<keyword id="KW-0547">Nucleotide-binding</keyword>
<keyword id="KW-0539">Nucleus</keyword>
<keyword id="KW-0597">Phosphoprotein</keyword>
<keyword id="KW-0723">Serine/threonine-protein kinase</keyword>
<keyword id="KW-0804">Transcription</keyword>
<keyword id="KW-0805">Transcription regulation</keyword>
<keyword id="KW-0808">Transferase</keyword>
<evidence type="ECO:0000250" key="1"/>
<evidence type="ECO:0000250" key="2">
    <source>
        <dbReference type="UniProtKB" id="P32485"/>
    </source>
</evidence>
<evidence type="ECO:0000250" key="3">
    <source>
        <dbReference type="UniProtKB" id="Q16539"/>
    </source>
</evidence>
<evidence type="ECO:0000250" key="4">
    <source>
        <dbReference type="UniProtKB" id="Q4WSF6"/>
    </source>
</evidence>
<evidence type="ECO:0000255" key="5">
    <source>
        <dbReference type="PROSITE-ProRule" id="PRU00159"/>
    </source>
</evidence>
<evidence type="ECO:0000255" key="6">
    <source>
        <dbReference type="PROSITE-ProRule" id="PRU10027"/>
    </source>
</evidence>
<evidence type="ECO:0000269" key="7">
    <source>
    </source>
</evidence>
<name>HOG1_COCHE</name>
<feature type="chain" id="PRO_0000289681" description="Mitogen-activated protein kinase HOG1">
    <location>
        <begin position="1"/>
        <end position="355"/>
    </location>
</feature>
<feature type="domain" description="Protein kinase" evidence="5">
    <location>
        <begin position="20"/>
        <end position="299"/>
    </location>
</feature>
<feature type="short sequence motif" description="TXY">
    <location>
        <begin position="171"/>
        <end position="173"/>
    </location>
</feature>
<feature type="active site" description="Proton acceptor" evidence="5 6">
    <location>
        <position position="141"/>
    </location>
</feature>
<feature type="binding site" evidence="5">
    <location>
        <begin position="26"/>
        <end position="34"/>
    </location>
    <ligand>
        <name>ATP</name>
        <dbReference type="ChEBI" id="CHEBI:30616"/>
    </ligand>
</feature>
<feature type="binding site" evidence="5">
    <location>
        <position position="49"/>
    </location>
    <ligand>
        <name>ATP</name>
        <dbReference type="ChEBI" id="CHEBI:30616"/>
    </ligand>
</feature>
<feature type="modified residue" description="Phosphothreonine" evidence="1">
    <location>
        <position position="171"/>
    </location>
</feature>
<feature type="modified residue" description="Phosphotyrosine" evidence="1">
    <location>
        <position position="173"/>
    </location>
</feature>
<proteinExistence type="evidence at protein level"/>
<protein>
    <recommendedName>
        <fullName>Mitogen-activated protein kinase HOG1</fullName>
        <shortName>MAP kinase HOG1</shortName>
        <ecNumber evidence="2">2.7.11.24</ecNumber>
    </recommendedName>
</protein>
<gene>
    <name type="primary">HOG1</name>
</gene>
<accession>Q4W6D3</accession>
<sequence length="355" mass="40768">MAEFVRAQIFGTTFEITSRYTDLQPVGMGAFGLVCSAKDQLTNQAVAVKKIMKPFSTPVLSKRTYRELKLLKHLRHENIISLSDIFISPLEDIYFVTELLGTDLHRLLTSRPLEKQFIQYFLYQILRGLKYVHSAGVVHRDLKPSNILVNENCDLKICDFGLARIQDPQMTGYVSTRYYRAPEIMLTWQKYDVEVDIWSAGCIFAEMLEGKPLFPGKDHVNQFSIITELLGTPPDDVIQTICSENTLRFVQSLPKRERQPLANKFKNAEPDAVDLLENMLVFDPRKRVRAEQALAHPYLAPYHDPTDEPVADEKFDWSFNDADLPVDTWKIMMYSEILDYHNVDAAVPEQENNGS</sequence>
<organism>
    <name type="scientific">Cochliobolus heterostrophus</name>
    <name type="common">Southern corn leaf blight fungus</name>
    <name type="synonym">Bipolaris maydis</name>
    <dbReference type="NCBI Taxonomy" id="5016"/>
    <lineage>
        <taxon>Eukaryota</taxon>
        <taxon>Fungi</taxon>
        <taxon>Dikarya</taxon>
        <taxon>Ascomycota</taxon>
        <taxon>Pezizomycotina</taxon>
        <taxon>Dothideomycetes</taxon>
        <taxon>Pleosporomycetidae</taxon>
        <taxon>Pleosporales</taxon>
        <taxon>Pleosporineae</taxon>
        <taxon>Pleosporaceae</taxon>
        <taxon>Bipolaris</taxon>
    </lineage>
</organism>
<comment type="function">
    <text evidence="4">Proline-directed serine/threonine-protein kinase involved in a signal transduction pathway that is activated by changes in the osmolarity of the extracellular environment. Controls osmotic regulation of transcription of target genes.</text>
</comment>
<comment type="catalytic activity">
    <reaction evidence="2">
        <text>L-seryl-[protein] + ATP = O-phospho-L-seryl-[protein] + ADP + H(+)</text>
        <dbReference type="Rhea" id="RHEA:17989"/>
        <dbReference type="Rhea" id="RHEA-COMP:9863"/>
        <dbReference type="Rhea" id="RHEA-COMP:11604"/>
        <dbReference type="ChEBI" id="CHEBI:15378"/>
        <dbReference type="ChEBI" id="CHEBI:29999"/>
        <dbReference type="ChEBI" id="CHEBI:30616"/>
        <dbReference type="ChEBI" id="CHEBI:83421"/>
        <dbReference type="ChEBI" id="CHEBI:456216"/>
        <dbReference type="EC" id="2.7.11.24"/>
    </reaction>
    <physiologicalReaction direction="left-to-right" evidence="2">
        <dbReference type="Rhea" id="RHEA:17990"/>
    </physiologicalReaction>
</comment>
<comment type="catalytic activity">
    <reaction evidence="2">
        <text>L-threonyl-[protein] + ATP = O-phospho-L-threonyl-[protein] + ADP + H(+)</text>
        <dbReference type="Rhea" id="RHEA:46608"/>
        <dbReference type="Rhea" id="RHEA-COMP:11060"/>
        <dbReference type="Rhea" id="RHEA-COMP:11605"/>
        <dbReference type="ChEBI" id="CHEBI:15378"/>
        <dbReference type="ChEBI" id="CHEBI:30013"/>
        <dbReference type="ChEBI" id="CHEBI:30616"/>
        <dbReference type="ChEBI" id="CHEBI:61977"/>
        <dbReference type="ChEBI" id="CHEBI:456216"/>
        <dbReference type="EC" id="2.7.11.24"/>
    </reaction>
    <physiologicalReaction direction="left-to-right" evidence="2">
        <dbReference type="Rhea" id="RHEA:46609"/>
    </physiologicalReaction>
</comment>
<comment type="cofactor">
    <cofactor evidence="3">
        <name>Mg(2+)</name>
        <dbReference type="ChEBI" id="CHEBI:18420"/>
    </cofactor>
</comment>
<comment type="activity regulation">
    <text evidence="1">Activated by tyrosine and threonine phosphorylation.</text>
</comment>
<comment type="subcellular location">
    <subcellularLocation>
        <location evidence="1">Cytoplasm</location>
    </subcellularLocation>
    <subcellularLocation>
        <location evidence="1">Nucleus</location>
    </subcellularLocation>
</comment>
<comment type="domain">
    <text>The TXY motif contains the threonine and tyrosine residues whose phosphorylation activates the MAP kinases.</text>
</comment>
<comment type="PTM">
    <text evidence="1 7">Dually phosphorylated on Thr-171 and Tyr-173, which activates the enzyme (By similarity). Phosphorylation is induced by osmotic stress and the presence of the antifungal agent iprodione.</text>
</comment>
<comment type="similarity">
    <text evidence="5">Belongs to the protein kinase superfamily. Ser/Thr protein kinase family. MAP kinase subfamily. HOG1 sub-subfamily.</text>
</comment>
<dbReference type="EC" id="2.7.11.24" evidence="2"/>
<dbReference type="EMBL" id="AB208438">
    <property type="protein sequence ID" value="BAD99295.1"/>
    <property type="molecule type" value="Genomic_DNA"/>
</dbReference>
<dbReference type="RefSeq" id="XP_014075962.1">
    <property type="nucleotide sequence ID" value="XM_014220487.1"/>
</dbReference>
<dbReference type="SMR" id="Q4W6D3"/>
<dbReference type="OMA" id="NRYTDLN"/>
<dbReference type="PHI-base" id="PHI:2365"/>
<dbReference type="GO" id="GO:0005737">
    <property type="term" value="C:cytoplasm"/>
    <property type="evidence" value="ECO:0007669"/>
    <property type="project" value="UniProtKB-SubCell"/>
</dbReference>
<dbReference type="GO" id="GO:0005634">
    <property type="term" value="C:nucleus"/>
    <property type="evidence" value="ECO:0007669"/>
    <property type="project" value="UniProtKB-SubCell"/>
</dbReference>
<dbReference type="GO" id="GO:0005524">
    <property type="term" value="F:ATP binding"/>
    <property type="evidence" value="ECO:0007669"/>
    <property type="project" value="UniProtKB-KW"/>
</dbReference>
<dbReference type="GO" id="GO:0004707">
    <property type="term" value="F:MAP kinase activity"/>
    <property type="evidence" value="ECO:0007669"/>
    <property type="project" value="UniProtKB-EC"/>
</dbReference>
<dbReference type="GO" id="GO:0106310">
    <property type="term" value="F:protein serine kinase activity"/>
    <property type="evidence" value="ECO:0007669"/>
    <property type="project" value="RHEA"/>
</dbReference>
<dbReference type="GO" id="GO:0051403">
    <property type="term" value="P:stress-activated MAPK cascade"/>
    <property type="evidence" value="ECO:0007669"/>
    <property type="project" value="InterPro"/>
</dbReference>
<dbReference type="CDD" id="cd07856">
    <property type="entry name" value="STKc_Sty1_Hog1"/>
    <property type="match status" value="1"/>
</dbReference>
<dbReference type="FunFam" id="1.10.510.10:FF:000049">
    <property type="entry name" value="Mitogen-activated protein kinase"/>
    <property type="match status" value="1"/>
</dbReference>
<dbReference type="FunFam" id="3.30.200.20:FF:000050">
    <property type="entry name" value="Mitogen-activated protein kinase"/>
    <property type="match status" value="1"/>
</dbReference>
<dbReference type="Gene3D" id="3.30.200.20">
    <property type="entry name" value="Phosphorylase Kinase, domain 1"/>
    <property type="match status" value="1"/>
</dbReference>
<dbReference type="Gene3D" id="1.10.510.10">
    <property type="entry name" value="Transferase(Phosphotransferase) domain 1"/>
    <property type="match status" value="1"/>
</dbReference>
<dbReference type="InterPro" id="IPR011009">
    <property type="entry name" value="Kinase-like_dom_sf"/>
</dbReference>
<dbReference type="InterPro" id="IPR050117">
    <property type="entry name" value="MAP_kinase"/>
</dbReference>
<dbReference type="InterPro" id="IPR003527">
    <property type="entry name" value="MAP_kinase_CS"/>
</dbReference>
<dbReference type="InterPro" id="IPR008352">
    <property type="entry name" value="MAPK_p38-like"/>
</dbReference>
<dbReference type="InterPro" id="IPR038783">
    <property type="entry name" value="MAPK_Sty1/Hog1"/>
</dbReference>
<dbReference type="InterPro" id="IPR000719">
    <property type="entry name" value="Prot_kinase_dom"/>
</dbReference>
<dbReference type="InterPro" id="IPR017441">
    <property type="entry name" value="Protein_kinase_ATP_BS"/>
</dbReference>
<dbReference type="InterPro" id="IPR008271">
    <property type="entry name" value="Ser/Thr_kinase_AS"/>
</dbReference>
<dbReference type="PANTHER" id="PTHR24055">
    <property type="entry name" value="MITOGEN-ACTIVATED PROTEIN KINASE"/>
    <property type="match status" value="1"/>
</dbReference>
<dbReference type="Pfam" id="PF00069">
    <property type="entry name" value="Pkinase"/>
    <property type="match status" value="1"/>
</dbReference>
<dbReference type="PRINTS" id="PR01773">
    <property type="entry name" value="P38MAPKINASE"/>
</dbReference>
<dbReference type="SMART" id="SM00220">
    <property type="entry name" value="S_TKc"/>
    <property type="match status" value="1"/>
</dbReference>
<dbReference type="SUPFAM" id="SSF56112">
    <property type="entry name" value="Protein kinase-like (PK-like)"/>
    <property type="match status" value="1"/>
</dbReference>
<dbReference type="PROSITE" id="PS01351">
    <property type="entry name" value="MAPK"/>
    <property type="match status" value="1"/>
</dbReference>
<dbReference type="PROSITE" id="PS00107">
    <property type="entry name" value="PROTEIN_KINASE_ATP"/>
    <property type="match status" value="1"/>
</dbReference>
<dbReference type="PROSITE" id="PS50011">
    <property type="entry name" value="PROTEIN_KINASE_DOM"/>
    <property type="match status" value="1"/>
</dbReference>
<dbReference type="PROSITE" id="PS00108">
    <property type="entry name" value="PROTEIN_KINASE_ST"/>
    <property type="match status" value="1"/>
</dbReference>
<reference key="1">
    <citation type="journal article" date="2005" name="Eukaryot. Cell">
        <title>Group III histidine kinase is a positive regulator of Hog1-type mitogen-activated protein kinase in filamentous fungi.</title>
        <authorList>
            <person name="Yoshimi A."/>
            <person name="Kojima K."/>
            <person name="Takano Y."/>
            <person name="Tanaka C."/>
        </authorList>
    </citation>
    <scope>NUCLEOTIDE SEQUENCE [GENOMIC DNA]</scope>
    <scope>PHOSPHORYLATION</scope>
    <source>
        <strain>HITO7711</strain>
    </source>
</reference>